<name>DNAK_STRPQ</name>
<gene>
    <name evidence="2" type="primary">dnaK</name>
    <name type="ordered locus">SPs0335</name>
</gene>
<sequence length="608" mass="64936">MSKIIGIDLGTTNSAVAVLEGTESKIIANPEGNRTTPSVVSFKNGEIIVGDAAKRQAVTNPDTVISIKSKMGTSEKVSANGKEYTPQEISAMILQYLKGYAEDYLGEKVEKAVITVPAYFNDAQRQATKDAGKIAGLEVERIVNEPTAAALAYGMDKTDKDEKILVFDLGGGTFDVSILELGDGVFDVLATAGDNKLGGDDFDQKIIDFLVAEFKKENGIDLSQDKMALQRLKDAAEKAKKDLSGVTQTQISLPFITAGSAGPLHLEMSLSRAKFDDLTRDLVERTKTPVRQALSDAGLSLSEIDEVILVGGSTRIPAVVEAVKAETGKEPNKSVNPDEVVAMGAAIQGGVITGDVKDVVLLDVTPLSLGIETMGGVFTKLIDRNTTIPTSKSQVFSTAADNQPAVDIHVLQGERPMAADNKTLGRFQLTDIPAAPRGIPQIEVTFDIDKNGIVSVKAKDLGTQKEQHIVIKSNDGLSEEEIDRMMKDAEANAEADAKRKEEVDLKNEVDQAIFATEKTIKETEGKGFDTERDAAQSALDELKAAQESGNLDDMKAKLEALNEKAQALAVKMYEQAAAAQQAAQGTEGAQANDSANNDDVVDGEFTEK</sequence>
<proteinExistence type="inferred from homology"/>
<comment type="function">
    <text evidence="2">Acts as a chaperone.</text>
</comment>
<comment type="induction">
    <text evidence="2">By stress conditions e.g. heat shock.</text>
</comment>
<comment type="similarity">
    <text evidence="2">Belongs to the heat shock protein 70 family.</text>
</comment>
<organism>
    <name type="scientific">Streptococcus pyogenes serotype M3 (strain SSI-1)</name>
    <dbReference type="NCBI Taxonomy" id="193567"/>
    <lineage>
        <taxon>Bacteria</taxon>
        <taxon>Bacillati</taxon>
        <taxon>Bacillota</taxon>
        <taxon>Bacilli</taxon>
        <taxon>Lactobacillales</taxon>
        <taxon>Streptococcaceae</taxon>
        <taxon>Streptococcus</taxon>
    </lineage>
</organism>
<reference key="1">
    <citation type="journal article" date="2003" name="Genome Res.">
        <title>Genome sequence of an M3 strain of Streptococcus pyogenes reveals a large-scale genomic rearrangement in invasive strains and new insights into phage evolution.</title>
        <authorList>
            <person name="Nakagawa I."/>
            <person name="Kurokawa K."/>
            <person name="Yamashita A."/>
            <person name="Nakata M."/>
            <person name="Tomiyasu Y."/>
            <person name="Okahashi N."/>
            <person name="Kawabata S."/>
            <person name="Yamazaki K."/>
            <person name="Shiba T."/>
            <person name="Yasunaga T."/>
            <person name="Hayashi H."/>
            <person name="Hattori M."/>
            <person name="Hamada S."/>
        </authorList>
    </citation>
    <scope>NUCLEOTIDE SEQUENCE [LARGE SCALE GENOMIC DNA]</scope>
    <source>
        <strain>SSI-1</strain>
    </source>
</reference>
<evidence type="ECO:0000250" key="1"/>
<evidence type="ECO:0000255" key="2">
    <source>
        <dbReference type="HAMAP-Rule" id="MF_00332"/>
    </source>
</evidence>
<evidence type="ECO:0000256" key="3">
    <source>
        <dbReference type="SAM" id="MobiDB-lite"/>
    </source>
</evidence>
<accession>P0DB71</accession>
<accession>Q8K624</accession>
<keyword id="KW-0067">ATP-binding</keyword>
<keyword id="KW-0143">Chaperone</keyword>
<keyword id="KW-0547">Nucleotide-binding</keyword>
<keyword id="KW-0597">Phosphoprotein</keyword>
<keyword id="KW-0346">Stress response</keyword>
<dbReference type="EMBL" id="BA000034">
    <property type="protein sequence ID" value="BAC63430.1"/>
    <property type="molecule type" value="Genomic_DNA"/>
</dbReference>
<dbReference type="RefSeq" id="WP_011054941.1">
    <property type="nucleotide sequence ID" value="NC_004606.1"/>
</dbReference>
<dbReference type="SMR" id="P0DB71"/>
<dbReference type="KEGG" id="sps:SPs0335"/>
<dbReference type="HOGENOM" id="CLU_005965_2_4_9"/>
<dbReference type="GO" id="GO:0005524">
    <property type="term" value="F:ATP binding"/>
    <property type="evidence" value="ECO:0007669"/>
    <property type="project" value="UniProtKB-UniRule"/>
</dbReference>
<dbReference type="GO" id="GO:0140662">
    <property type="term" value="F:ATP-dependent protein folding chaperone"/>
    <property type="evidence" value="ECO:0007669"/>
    <property type="project" value="InterPro"/>
</dbReference>
<dbReference type="GO" id="GO:0051082">
    <property type="term" value="F:unfolded protein binding"/>
    <property type="evidence" value="ECO:0007669"/>
    <property type="project" value="InterPro"/>
</dbReference>
<dbReference type="CDD" id="cd10234">
    <property type="entry name" value="ASKHA_NBD_HSP70_DnaK-like"/>
    <property type="match status" value="1"/>
</dbReference>
<dbReference type="FunFam" id="2.60.34.10:FF:000014">
    <property type="entry name" value="Chaperone protein DnaK HSP70"/>
    <property type="match status" value="1"/>
</dbReference>
<dbReference type="FunFam" id="3.30.420.40:FF:000071">
    <property type="entry name" value="Molecular chaperone DnaK"/>
    <property type="match status" value="1"/>
</dbReference>
<dbReference type="FunFam" id="3.90.640.10:FF:000003">
    <property type="entry name" value="Molecular chaperone DnaK"/>
    <property type="match status" value="1"/>
</dbReference>
<dbReference type="Gene3D" id="1.20.1270.10">
    <property type="match status" value="1"/>
</dbReference>
<dbReference type="Gene3D" id="3.30.420.40">
    <property type="match status" value="2"/>
</dbReference>
<dbReference type="Gene3D" id="3.90.640.10">
    <property type="entry name" value="Actin, Chain A, domain 4"/>
    <property type="match status" value="1"/>
</dbReference>
<dbReference type="Gene3D" id="2.60.34.10">
    <property type="entry name" value="Substrate Binding Domain Of DNAk, Chain A, domain 1"/>
    <property type="match status" value="1"/>
</dbReference>
<dbReference type="HAMAP" id="MF_00332">
    <property type="entry name" value="DnaK"/>
    <property type="match status" value="1"/>
</dbReference>
<dbReference type="InterPro" id="IPR043129">
    <property type="entry name" value="ATPase_NBD"/>
</dbReference>
<dbReference type="InterPro" id="IPR012725">
    <property type="entry name" value="Chaperone_DnaK"/>
</dbReference>
<dbReference type="InterPro" id="IPR018181">
    <property type="entry name" value="Heat_shock_70_CS"/>
</dbReference>
<dbReference type="InterPro" id="IPR029048">
    <property type="entry name" value="HSP70_C_sf"/>
</dbReference>
<dbReference type="InterPro" id="IPR029047">
    <property type="entry name" value="HSP70_peptide-bd_sf"/>
</dbReference>
<dbReference type="InterPro" id="IPR013126">
    <property type="entry name" value="Hsp_70_fam"/>
</dbReference>
<dbReference type="NCBIfam" id="NF001413">
    <property type="entry name" value="PRK00290.1"/>
    <property type="match status" value="1"/>
</dbReference>
<dbReference type="NCBIfam" id="TIGR02350">
    <property type="entry name" value="prok_dnaK"/>
    <property type="match status" value="1"/>
</dbReference>
<dbReference type="PANTHER" id="PTHR19375">
    <property type="entry name" value="HEAT SHOCK PROTEIN 70KDA"/>
    <property type="match status" value="1"/>
</dbReference>
<dbReference type="Pfam" id="PF00012">
    <property type="entry name" value="HSP70"/>
    <property type="match status" value="1"/>
</dbReference>
<dbReference type="PRINTS" id="PR00301">
    <property type="entry name" value="HEATSHOCK70"/>
</dbReference>
<dbReference type="SUPFAM" id="SSF53067">
    <property type="entry name" value="Actin-like ATPase domain"/>
    <property type="match status" value="2"/>
</dbReference>
<dbReference type="SUPFAM" id="SSF100934">
    <property type="entry name" value="Heat shock protein 70kD (HSP70), C-terminal subdomain"/>
    <property type="match status" value="1"/>
</dbReference>
<dbReference type="SUPFAM" id="SSF100920">
    <property type="entry name" value="Heat shock protein 70kD (HSP70), peptide-binding domain"/>
    <property type="match status" value="1"/>
</dbReference>
<dbReference type="PROSITE" id="PS00297">
    <property type="entry name" value="HSP70_1"/>
    <property type="match status" value="1"/>
</dbReference>
<dbReference type="PROSITE" id="PS00329">
    <property type="entry name" value="HSP70_2"/>
    <property type="match status" value="1"/>
</dbReference>
<dbReference type="PROSITE" id="PS01036">
    <property type="entry name" value="HSP70_3"/>
    <property type="match status" value="1"/>
</dbReference>
<feature type="initiator methionine" description="Removed" evidence="1">
    <location>
        <position position="1"/>
    </location>
</feature>
<feature type="chain" id="PRO_0000411373" description="Chaperone protein DnaK">
    <location>
        <begin position="2"/>
        <end position="608"/>
    </location>
</feature>
<feature type="region of interest" description="Disordered" evidence="3">
    <location>
        <begin position="578"/>
        <end position="608"/>
    </location>
</feature>
<feature type="compositionally biased region" description="Low complexity" evidence="3">
    <location>
        <begin position="578"/>
        <end position="598"/>
    </location>
</feature>
<feature type="compositionally biased region" description="Acidic residues" evidence="3">
    <location>
        <begin position="599"/>
        <end position="608"/>
    </location>
</feature>
<feature type="modified residue" description="Phosphothreonine; by autocatalysis" evidence="2">
    <location>
        <position position="173"/>
    </location>
</feature>
<protein>
    <recommendedName>
        <fullName evidence="2">Chaperone protein DnaK</fullName>
    </recommendedName>
    <alternativeName>
        <fullName evidence="2">HSP70</fullName>
    </alternativeName>
    <alternativeName>
        <fullName evidence="2">Heat shock 70 kDa protein</fullName>
    </alternativeName>
    <alternativeName>
        <fullName evidence="2">Heat shock protein 70</fullName>
    </alternativeName>
</protein>